<evidence type="ECO:0000250" key="1"/>
<evidence type="ECO:0000305" key="2"/>
<geneLocation type="plasmid">
    <name>IncI1 ColIb-P9</name>
</geneLocation>
<name>IMPC_ECOLX</name>
<reference key="1">
    <citation type="submission" date="1998-12" db="EMBL/GenBank/DDBJ databases">
        <title>Organization and diversification of plasmid genomes: complete nucleotide sequence of the ColIb-P9 genome.</title>
        <authorList>
            <person name="Sampei G."/>
            <person name="Mizobuchi K."/>
        </authorList>
    </citation>
    <scope>NUCLEOTIDE SEQUENCE [GENOMIC DNA]</scope>
</reference>
<proteinExistence type="inferred from homology"/>
<protein>
    <recommendedName>
        <fullName>Protein ImpC</fullName>
    </recommendedName>
</protein>
<accession>P0A1G1</accession>
<accession>P18643</accession>
<comment type="function">
    <text evidence="1">The imp operon is involved in UV protection and mutation, however the ImpC protein is not essential for these functions.</text>
</comment>
<comment type="similarity">
    <text evidence="2">Belongs to the DinI family.</text>
</comment>
<organism>
    <name type="scientific">Escherichia coli</name>
    <dbReference type="NCBI Taxonomy" id="562"/>
    <lineage>
        <taxon>Bacteria</taxon>
        <taxon>Pseudomonadati</taxon>
        <taxon>Pseudomonadota</taxon>
        <taxon>Gammaproteobacteria</taxon>
        <taxon>Enterobacterales</taxon>
        <taxon>Enterobacteriaceae</taxon>
        <taxon>Escherichia</taxon>
    </lineage>
</organism>
<dbReference type="EMBL" id="AB021078">
    <property type="protein sequence ID" value="BAA75115.1"/>
    <property type="molecule type" value="Genomic_DNA"/>
</dbReference>
<dbReference type="RefSeq" id="WP_000618110.1">
    <property type="nucleotide sequence ID" value="NZ_WXZA01000022.1"/>
</dbReference>
<dbReference type="RefSeq" id="YP_003108105.1">
    <property type="nucleotide sequence ID" value="NC_013120.1"/>
</dbReference>
<dbReference type="RefSeq" id="YP_003864276.1">
    <property type="nucleotide sequence ID" value="NC_014477.1"/>
</dbReference>
<dbReference type="RefSeq" id="YP_004119772.1">
    <property type="nucleotide sequence ID" value="NC_014843.1"/>
</dbReference>
<dbReference type="RefSeq" id="YP_006954376.1">
    <property type="nucleotide sequence ID" value="NC_019097.1"/>
</dbReference>
<dbReference type="RefSeq" id="YP_008826375.1">
    <property type="nucleotide sequence ID" value="NC_022885.1"/>
</dbReference>
<dbReference type="RefSeq" id="YP_008998746.1">
    <property type="nucleotide sequence ID" value="NC_023329.1"/>
</dbReference>
<dbReference type="RefSeq" id="YP_009060007.1">
    <property type="nucleotide sequence ID" value="NC_024955.2"/>
</dbReference>
<dbReference type="RefSeq" id="YP_009061219.1">
    <property type="nucleotide sequence ID" value="NC_024976.1"/>
</dbReference>
<dbReference type="RefSeq" id="YP_009061321.1">
    <property type="nucleotide sequence ID" value="NC_024977.1"/>
</dbReference>
<dbReference type="RefSeq" id="YP_009061452.1">
    <property type="nucleotide sequence ID" value="NC_024978.1"/>
</dbReference>
<dbReference type="RefSeq" id="YP_009061579.1">
    <property type="nucleotide sequence ID" value="NC_024979.1"/>
</dbReference>
<dbReference type="RefSeq" id="YP_009061710.1">
    <property type="nucleotide sequence ID" value="NC_024980.1"/>
</dbReference>
<dbReference type="RefSeq" id="YP_009068481.1">
    <property type="nucleotide sequence ID" value="NC_025140.1"/>
</dbReference>
<dbReference type="RefSeq" id="YP_009068770.1">
    <property type="nucleotide sequence ID" value="NC_025142.1"/>
</dbReference>
<dbReference type="RefSeq" id="YP_009068962.1">
    <property type="nucleotide sequence ID" value="NC_025143.1"/>
</dbReference>
<dbReference type="RefSeq" id="YP_009069083.1">
    <property type="nucleotide sequence ID" value="NC_025144.1"/>
</dbReference>
<dbReference type="RefSeq" id="YP_009069610.1">
    <property type="nucleotide sequence ID" value="NC_025147.1"/>
</dbReference>
<dbReference type="RefSeq" id="YP_009070819.1">
    <property type="nucleotide sequence ID" value="NC_025176.1"/>
</dbReference>
<dbReference type="RefSeq" id="YP_009071357.1">
    <property type="nucleotide sequence ID" value="NC_025180.1"/>
</dbReference>
<dbReference type="RefSeq" id="YP_009328623.1">
    <property type="nucleotide sequence ID" value="NC_032100.1"/>
</dbReference>
<dbReference type="RefSeq" id="YP_190179.1">
    <property type="nucleotide sequence ID" value="NC_006671.1"/>
</dbReference>
<dbReference type="SMR" id="P0A1G1"/>
<dbReference type="OMA" id="ILEEIWM"/>
<dbReference type="GO" id="GO:0006281">
    <property type="term" value="P:DNA repair"/>
    <property type="evidence" value="ECO:0007669"/>
    <property type="project" value="UniProtKB-KW"/>
</dbReference>
<dbReference type="GO" id="GO:0009432">
    <property type="term" value="P:SOS response"/>
    <property type="evidence" value="ECO:0007669"/>
    <property type="project" value="TreeGrafter"/>
</dbReference>
<dbReference type="Gene3D" id="3.30.910.10">
    <property type="entry name" value="DinI-like"/>
    <property type="match status" value="1"/>
</dbReference>
<dbReference type="InterPro" id="IPR036687">
    <property type="entry name" value="DinI-like_sf"/>
</dbReference>
<dbReference type="InterPro" id="IPR010391">
    <property type="entry name" value="DNA_damage-inducible_DinI-like"/>
</dbReference>
<dbReference type="PANTHER" id="PTHR36572:SF2">
    <property type="entry name" value="DNA DAMAGE-INDUCIBLE PROTEIN I"/>
    <property type="match status" value="1"/>
</dbReference>
<dbReference type="PANTHER" id="PTHR36572">
    <property type="entry name" value="DNA DAMAGE-INDUCIBLE PROTEIN I-RELATED"/>
    <property type="match status" value="1"/>
</dbReference>
<dbReference type="Pfam" id="PF06183">
    <property type="entry name" value="DinI"/>
    <property type="match status" value="1"/>
</dbReference>
<dbReference type="SUPFAM" id="SSF54857">
    <property type="entry name" value="DNA damage-inducible protein DinI"/>
    <property type="match status" value="1"/>
</dbReference>
<gene>
    <name type="primary">impC</name>
</gene>
<feature type="chain" id="PRO_0000201640" description="Protein ImpC">
    <location>
        <begin position="1"/>
        <end position="82"/>
    </location>
</feature>
<keyword id="KW-0227">DNA damage</keyword>
<keyword id="KW-0234">DNA repair</keyword>
<keyword id="KW-0614">Plasmid</keyword>
<sequence length="82" mass="9502">MIRIEILFDRQSTKNLKSGTLQALQNEIEQRLKPHYPEIWLRIDQGSAPSVSVTGARNDKDKERILSLLEEIWQDDSWLPAA</sequence>